<comment type="function">
    <text evidence="1">Catalyzes the transfer of the enolpyruvyl moiety of phosphoenolpyruvate (PEP) to the 5-hydroxyl of shikimate-3-phosphate (S3P) to produce enolpyruvyl shikimate-3-phosphate and inorganic phosphate.</text>
</comment>
<comment type="catalytic activity">
    <reaction evidence="1">
        <text>3-phosphoshikimate + phosphoenolpyruvate = 5-O-(1-carboxyvinyl)-3-phosphoshikimate + phosphate</text>
        <dbReference type="Rhea" id="RHEA:21256"/>
        <dbReference type="ChEBI" id="CHEBI:43474"/>
        <dbReference type="ChEBI" id="CHEBI:57701"/>
        <dbReference type="ChEBI" id="CHEBI:58702"/>
        <dbReference type="ChEBI" id="CHEBI:145989"/>
        <dbReference type="EC" id="2.5.1.19"/>
    </reaction>
    <physiologicalReaction direction="left-to-right" evidence="1">
        <dbReference type="Rhea" id="RHEA:21257"/>
    </physiologicalReaction>
</comment>
<comment type="pathway">
    <text evidence="1">Metabolic intermediate biosynthesis; chorismate biosynthesis; chorismate from D-erythrose 4-phosphate and phosphoenolpyruvate: step 6/7.</text>
</comment>
<comment type="subunit">
    <text evidence="1">Monomer.</text>
</comment>
<comment type="subcellular location">
    <subcellularLocation>
        <location evidence="1">Cytoplasm</location>
    </subcellularLocation>
</comment>
<comment type="similarity">
    <text evidence="1">Belongs to the EPSP synthase family.</text>
</comment>
<organism>
    <name type="scientific">Streptococcus mutans serotype c (strain ATCC 700610 / UA159)</name>
    <dbReference type="NCBI Taxonomy" id="210007"/>
    <lineage>
        <taxon>Bacteria</taxon>
        <taxon>Bacillati</taxon>
        <taxon>Bacillota</taxon>
        <taxon>Bacilli</taxon>
        <taxon>Lactobacillales</taxon>
        <taxon>Streptococcaceae</taxon>
        <taxon>Streptococcus</taxon>
    </lineage>
</organism>
<evidence type="ECO:0000255" key="1">
    <source>
        <dbReference type="HAMAP-Rule" id="MF_00210"/>
    </source>
</evidence>
<dbReference type="EC" id="2.5.1.19" evidence="1"/>
<dbReference type="EMBL" id="AE014133">
    <property type="protein sequence ID" value="AAN58503.1"/>
    <property type="molecule type" value="Genomic_DNA"/>
</dbReference>
<dbReference type="RefSeq" id="NP_721197.1">
    <property type="nucleotide sequence ID" value="NC_004350.2"/>
</dbReference>
<dbReference type="RefSeq" id="WP_002261938.1">
    <property type="nucleotide sequence ID" value="NC_004350.2"/>
</dbReference>
<dbReference type="SMR" id="Q8DUV8"/>
<dbReference type="STRING" id="210007.SMU_784"/>
<dbReference type="KEGG" id="smu:SMU_784"/>
<dbReference type="PATRIC" id="fig|210007.7.peg.694"/>
<dbReference type="eggNOG" id="COG0128">
    <property type="taxonomic scope" value="Bacteria"/>
</dbReference>
<dbReference type="HOGENOM" id="CLU_024321_0_1_9"/>
<dbReference type="OrthoDB" id="9809920at2"/>
<dbReference type="PhylomeDB" id="Q8DUV8"/>
<dbReference type="UniPathway" id="UPA00053">
    <property type="reaction ID" value="UER00089"/>
</dbReference>
<dbReference type="Proteomes" id="UP000002512">
    <property type="component" value="Chromosome"/>
</dbReference>
<dbReference type="GO" id="GO:0005737">
    <property type="term" value="C:cytoplasm"/>
    <property type="evidence" value="ECO:0007669"/>
    <property type="project" value="UniProtKB-SubCell"/>
</dbReference>
<dbReference type="GO" id="GO:0003866">
    <property type="term" value="F:3-phosphoshikimate 1-carboxyvinyltransferase activity"/>
    <property type="evidence" value="ECO:0007669"/>
    <property type="project" value="UniProtKB-UniRule"/>
</dbReference>
<dbReference type="GO" id="GO:0008652">
    <property type="term" value="P:amino acid biosynthetic process"/>
    <property type="evidence" value="ECO:0007669"/>
    <property type="project" value="UniProtKB-KW"/>
</dbReference>
<dbReference type="GO" id="GO:0009073">
    <property type="term" value="P:aromatic amino acid family biosynthetic process"/>
    <property type="evidence" value="ECO:0007669"/>
    <property type="project" value="UniProtKB-KW"/>
</dbReference>
<dbReference type="GO" id="GO:0009423">
    <property type="term" value="P:chorismate biosynthetic process"/>
    <property type="evidence" value="ECO:0007669"/>
    <property type="project" value="UniProtKB-UniRule"/>
</dbReference>
<dbReference type="CDD" id="cd01556">
    <property type="entry name" value="EPSP_synthase"/>
    <property type="match status" value="1"/>
</dbReference>
<dbReference type="FunFam" id="3.65.10.10:FF:000005">
    <property type="entry name" value="3-phosphoshikimate 1-carboxyvinyltransferase"/>
    <property type="match status" value="1"/>
</dbReference>
<dbReference type="FunFam" id="3.65.10.10:FF:000006">
    <property type="entry name" value="3-phosphoshikimate 1-carboxyvinyltransferase"/>
    <property type="match status" value="1"/>
</dbReference>
<dbReference type="Gene3D" id="3.65.10.10">
    <property type="entry name" value="Enolpyruvate transferase domain"/>
    <property type="match status" value="2"/>
</dbReference>
<dbReference type="HAMAP" id="MF_00210">
    <property type="entry name" value="EPSP_synth"/>
    <property type="match status" value="1"/>
</dbReference>
<dbReference type="InterPro" id="IPR001986">
    <property type="entry name" value="Enolpyruvate_Tfrase_dom"/>
</dbReference>
<dbReference type="InterPro" id="IPR036968">
    <property type="entry name" value="Enolpyruvate_Tfrase_sf"/>
</dbReference>
<dbReference type="InterPro" id="IPR006264">
    <property type="entry name" value="EPSP_synthase"/>
</dbReference>
<dbReference type="InterPro" id="IPR023193">
    <property type="entry name" value="EPSP_synthase_CS"/>
</dbReference>
<dbReference type="InterPro" id="IPR013792">
    <property type="entry name" value="RNA3'P_cycl/enolpyr_Trfase_a/b"/>
</dbReference>
<dbReference type="NCBIfam" id="TIGR01356">
    <property type="entry name" value="aroA"/>
    <property type="match status" value="1"/>
</dbReference>
<dbReference type="PANTHER" id="PTHR21090">
    <property type="entry name" value="AROM/DEHYDROQUINATE SYNTHASE"/>
    <property type="match status" value="1"/>
</dbReference>
<dbReference type="PANTHER" id="PTHR21090:SF5">
    <property type="entry name" value="PENTAFUNCTIONAL AROM POLYPEPTIDE"/>
    <property type="match status" value="1"/>
</dbReference>
<dbReference type="Pfam" id="PF00275">
    <property type="entry name" value="EPSP_synthase"/>
    <property type="match status" value="1"/>
</dbReference>
<dbReference type="PIRSF" id="PIRSF000505">
    <property type="entry name" value="EPSPS"/>
    <property type="match status" value="1"/>
</dbReference>
<dbReference type="SUPFAM" id="SSF55205">
    <property type="entry name" value="EPT/RTPC-like"/>
    <property type="match status" value="1"/>
</dbReference>
<dbReference type="PROSITE" id="PS00104">
    <property type="entry name" value="EPSP_SYNTHASE_1"/>
    <property type="match status" value="1"/>
</dbReference>
<dbReference type="PROSITE" id="PS00885">
    <property type="entry name" value="EPSP_SYNTHASE_2"/>
    <property type="match status" value="1"/>
</dbReference>
<sequence>MKLRTNASGLSGTLKIPGDKSISHRSIMFGSLAKGITKIYGILRGEDVLSTMQAFRDLGVEIKDKDDFVEIHGRGFDGLKSPKKALDMGNSGTSIRLISGVLAGQDFTVEMFGDDSLSKRPMDRVTVPLRQMGVQILGRTERDLPPLTMKGSKRLKPIRYELPVASAQVKSALIFAALQASGESVIIEKEKTRNHTEDMIKQFGGHLDVDGKEIRISGGQEFTAQNVIVPGDISSAAFWLAAGLIVSNSKLTLKNVGINETRTGILEVIEAMGGKVELSDRDDLAKAATLTVESSNLKGTEIGGDIIPRLIDELPIIALLATQANGRTVIYDAQELKVKETDRIQVVADALNAMGAKITPTDDGMIIEGKTNLHGAKVNTFGDHRIGMMTAIAALLVKEGEVELERAEAINTSYPTFFSDLERITNG</sequence>
<feature type="chain" id="PRO_0000088303" description="3-phosphoshikimate 1-carboxyvinyltransferase">
    <location>
        <begin position="1"/>
        <end position="427"/>
    </location>
</feature>
<feature type="active site" description="Proton acceptor" evidence="1">
    <location>
        <position position="312"/>
    </location>
</feature>
<feature type="binding site" evidence="1">
    <location>
        <position position="20"/>
    </location>
    <ligand>
        <name>3-phosphoshikimate</name>
        <dbReference type="ChEBI" id="CHEBI:145989"/>
    </ligand>
</feature>
<feature type="binding site" evidence="1">
    <location>
        <position position="20"/>
    </location>
    <ligand>
        <name>phosphoenolpyruvate</name>
        <dbReference type="ChEBI" id="CHEBI:58702"/>
    </ligand>
</feature>
<feature type="binding site" evidence="1">
    <location>
        <position position="21"/>
    </location>
    <ligand>
        <name>3-phosphoshikimate</name>
        <dbReference type="ChEBI" id="CHEBI:145989"/>
    </ligand>
</feature>
<feature type="binding site" evidence="1">
    <location>
        <position position="25"/>
    </location>
    <ligand>
        <name>3-phosphoshikimate</name>
        <dbReference type="ChEBI" id="CHEBI:145989"/>
    </ligand>
</feature>
<feature type="binding site" evidence="1">
    <location>
        <position position="92"/>
    </location>
    <ligand>
        <name>phosphoenolpyruvate</name>
        <dbReference type="ChEBI" id="CHEBI:58702"/>
    </ligand>
</feature>
<feature type="binding site" evidence="1">
    <location>
        <position position="120"/>
    </location>
    <ligand>
        <name>phosphoenolpyruvate</name>
        <dbReference type="ChEBI" id="CHEBI:58702"/>
    </ligand>
</feature>
<feature type="binding site" evidence="1">
    <location>
        <position position="166"/>
    </location>
    <ligand>
        <name>3-phosphoshikimate</name>
        <dbReference type="ChEBI" id="CHEBI:145989"/>
    </ligand>
</feature>
<feature type="binding site" evidence="1">
    <location>
        <position position="168"/>
    </location>
    <ligand>
        <name>3-phosphoshikimate</name>
        <dbReference type="ChEBI" id="CHEBI:145989"/>
    </ligand>
</feature>
<feature type="binding site" evidence="1">
    <location>
        <position position="168"/>
    </location>
    <ligand>
        <name>phosphoenolpyruvate</name>
        <dbReference type="ChEBI" id="CHEBI:58702"/>
    </ligand>
</feature>
<feature type="binding site" evidence="1">
    <location>
        <position position="312"/>
    </location>
    <ligand>
        <name>3-phosphoshikimate</name>
        <dbReference type="ChEBI" id="CHEBI:145989"/>
    </ligand>
</feature>
<feature type="binding site" evidence="1">
    <location>
        <position position="339"/>
    </location>
    <ligand>
        <name>3-phosphoshikimate</name>
        <dbReference type="ChEBI" id="CHEBI:145989"/>
    </ligand>
</feature>
<feature type="binding site" evidence="1">
    <location>
        <position position="343"/>
    </location>
    <ligand>
        <name>phosphoenolpyruvate</name>
        <dbReference type="ChEBI" id="CHEBI:58702"/>
    </ligand>
</feature>
<feature type="binding site" evidence="1">
    <location>
        <position position="385"/>
    </location>
    <ligand>
        <name>phosphoenolpyruvate</name>
        <dbReference type="ChEBI" id="CHEBI:58702"/>
    </ligand>
</feature>
<keyword id="KW-0028">Amino-acid biosynthesis</keyword>
<keyword id="KW-0057">Aromatic amino acid biosynthesis</keyword>
<keyword id="KW-0963">Cytoplasm</keyword>
<keyword id="KW-1185">Reference proteome</keyword>
<keyword id="KW-0808">Transferase</keyword>
<reference key="1">
    <citation type="journal article" date="2002" name="Proc. Natl. Acad. Sci. U.S.A.">
        <title>Genome sequence of Streptococcus mutans UA159, a cariogenic dental pathogen.</title>
        <authorList>
            <person name="Ajdic D.J."/>
            <person name="McShan W.M."/>
            <person name="McLaughlin R.E."/>
            <person name="Savic G."/>
            <person name="Chang J."/>
            <person name="Carson M.B."/>
            <person name="Primeaux C."/>
            <person name="Tian R."/>
            <person name="Kenton S."/>
            <person name="Jia H.G."/>
            <person name="Lin S.P."/>
            <person name="Qian Y."/>
            <person name="Li S."/>
            <person name="Zhu H."/>
            <person name="Najar F.Z."/>
            <person name="Lai H."/>
            <person name="White J."/>
            <person name="Roe B.A."/>
            <person name="Ferretti J.J."/>
        </authorList>
    </citation>
    <scope>NUCLEOTIDE SEQUENCE [LARGE SCALE GENOMIC DNA]</scope>
    <source>
        <strain>ATCC 700610 / UA159</strain>
    </source>
</reference>
<accession>Q8DUV8</accession>
<proteinExistence type="inferred from homology"/>
<protein>
    <recommendedName>
        <fullName evidence="1">3-phosphoshikimate 1-carboxyvinyltransferase</fullName>
        <ecNumber evidence="1">2.5.1.19</ecNumber>
    </recommendedName>
    <alternativeName>
        <fullName evidence="1">5-enolpyruvylshikimate-3-phosphate synthase</fullName>
        <shortName evidence="1">EPSP synthase</shortName>
        <shortName evidence="1">EPSPS</shortName>
    </alternativeName>
</protein>
<name>AROA_STRMU</name>
<gene>
    <name evidence="1" type="primary">aroA</name>
    <name type="ordered locus">SMU_784</name>
</gene>